<protein>
    <recommendedName>
        <fullName evidence="1">tRNA N6-adenosine threonylcarbamoyltransferase</fullName>
        <ecNumber evidence="1">2.3.1.234</ecNumber>
    </recommendedName>
    <alternativeName>
        <fullName evidence="1">N6-L-threonylcarbamoyladenine synthase</fullName>
        <shortName evidence="1">t(6)A synthase</shortName>
    </alternativeName>
    <alternativeName>
        <fullName evidence="1">t(6)A37 threonylcarbamoyladenosine biosynthesis protein TsaD</fullName>
    </alternativeName>
    <alternativeName>
        <fullName evidence="1">tRNA threonylcarbamoyladenosine biosynthesis protein TsaD</fullName>
    </alternativeName>
</protein>
<sequence length="344" mass="37258">MVKRNLILAFESSCDETSVSVIEDGHRVLSNIVATQIASHQRFGGVVPEVASRHHIEQITKCTKEALEQAGVSYQDLTAVAVTYGPGLVGSLLIGVTAAKTIAWAHQLPLVPVNHMAGHLYAARFVSDFTYPMLGLLVSGGHTELVYMKEEHDYQIIGETRDDAAGEAYDKVGRVMGINYPAGKTVDQWAAKGHDTFHFPRAMEKEDNFDFSFSGLKSAFINTVHNADQRGEVLDKYDLAASFQQSVVDVLVAKTIRALDEFPVKQLILAGGVAANQGLRKQLSAGLQAKHPEVQLLQAPLKYCGDNAAMIGAAGYVNYLHGDRADGSLNAVPGLSFAHLKEEN</sequence>
<dbReference type="EC" id="2.3.1.234" evidence="1"/>
<dbReference type="EMBL" id="AP008937">
    <property type="protein sequence ID" value="BAG26642.1"/>
    <property type="molecule type" value="Genomic_DNA"/>
</dbReference>
<dbReference type="RefSeq" id="WP_012390845.1">
    <property type="nucleotide sequence ID" value="NC_010610.1"/>
</dbReference>
<dbReference type="SMR" id="B2GAG0"/>
<dbReference type="KEGG" id="lfe:LAF_0306"/>
<dbReference type="PATRIC" id="fig|334390.5.peg.337"/>
<dbReference type="eggNOG" id="COG0533">
    <property type="taxonomic scope" value="Bacteria"/>
</dbReference>
<dbReference type="HOGENOM" id="CLU_023208_0_2_9"/>
<dbReference type="Proteomes" id="UP000001697">
    <property type="component" value="Chromosome"/>
</dbReference>
<dbReference type="GO" id="GO:0005737">
    <property type="term" value="C:cytoplasm"/>
    <property type="evidence" value="ECO:0007669"/>
    <property type="project" value="UniProtKB-SubCell"/>
</dbReference>
<dbReference type="GO" id="GO:0005506">
    <property type="term" value="F:iron ion binding"/>
    <property type="evidence" value="ECO:0007669"/>
    <property type="project" value="UniProtKB-UniRule"/>
</dbReference>
<dbReference type="GO" id="GO:0061711">
    <property type="term" value="F:N(6)-L-threonylcarbamoyladenine synthase activity"/>
    <property type="evidence" value="ECO:0007669"/>
    <property type="project" value="UniProtKB-EC"/>
</dbReference>
<dbReference type="GO" id="GO:0002949">
    <property type="term" value="P:tRNA threonylcarbamoyladenosine modification"/>
    <property type="evidence" value="ECO:0007669"/>
    <property type="project" value="UniProtKB-UniRule"/>
</dbReference>
<dbReference type="CDD" id="cd24133">
    <property type="entry name" value="ASKHA_NBD_TsaD_bac"/>
    <property type="match status" value="1"/>
</dbReference>
<dbReference type="FunFam" id="3.30.420.40:FF:000012">
    <property type="entry name" value="tRNA N6-adenosine threonylcarbamoyltransferase"/>
    <property type="match status" value="1"/>
</dbReference>
<dbReference type="FunFam" id="3.30.420.40:FF:000040">
    <property type="entry name" value="tRNA N6-adenosine threonylcarbamoyltransferase"/>
    <property type="match status" value="1"/>
</dbReference>
<dbReference type="Gene3D" id="3.30.420.40">
    <property type="match status" value="2"/>
</dbReference>
<dbReference type="HAMAP" id="MF_01445">
    <property type="entry name" value="TsaD"/>
    <property type="match status" value="1"/>
</dbReference>
<dbReference type="InterPro" id="IPR043129">
    <property type="entry name" value="ATPase_NBD"/>
</dbReference>
<dbReference type="InterPro" id="IPR000905">
    <property type="entry name" value="Gcp-like_dom"/>
</dbReference>
<dbReference type="InterPro" id="IPR017861">
    <property type="entry name" value="KAE1/TsaD"/>
</dbReference>
<dbReference type="InterPro" id="IPR017860">
    <property type="entry name" value="Peptidase_M22_CS"/>
</dbReference>
<dbReference type="InterPro" id="IPR022450">
    <property type="entry name" value="TsaD"/>
</dbReference>
<dbReference type="NCBIfam" id="TIGR00329">
    <property type="entry name" value="gcp_kae1"/>
    <property type="match status" value="1"/>
</dbReference>
<dbReference type="NCBIfam" id="TIGR03723">
    <property type="entry name" value="T6A_TsaD_YgjD"/>
    <property type="match status" value="1"/>
</dbReference>
<dbReference type="PANTHER" id="PTHR11735">
    <property type="entry name" value="TRNA N6-ADENOSINE THREONYLCARBAMOYLTRANSFERASE"/>
    <property type="match status" value="1"/>
</dbReference>
<dbReference type="PANTHER" id="PTHR11735:SF6">
    <property type="entry name" value="TRNA N6-ADENOSINE THREONYLCARBAMOYLTRANSFERASE, MITOCHONDRIAL"/>
    <property type="match status" value="1"/>
</dbReference>
<dbReference type="Pfam" id="PF00814">
    <property type="entry name" value="TsaD"/>
    <property type="match status" value="1"/>
</dbReference>
<dbReference type="PRINTS" id="PR00789">
    <property type="entry name" value="OSIALOPTASE"/>
</dbReference>
<dbReference type="SUPFAM" id="SSF53067">
    <property type="entry name" value="Actin-like ATPase domain"/>
    <property type="match status" value="2"/>
</dbReference>
<dbReference type="PROSITE" id="PS01016">
    <property type="entry name" value="GLYCOPROTEASE"/>
    <property type="match status" value="1"/>
</dbReference>
<gene>
    <name evidence="1" type="primary">tsaD</name>
    <name type="synonym">gcp</name>
    <name type="ordered locus">LAF_0306</name>
</gene>
<feature type="chain" id="PRO_1000145991" description="tRNA N6-adenosine threonylcarbamoyltransferase">
    <location>
        <begin position="1"/>
        <end position="344"/>
    </location>
</feature>
<feature type="binding site" evidence="1">
    <location>
        <position position="115"/>
    </location>
    <ligand>
        <name>Fe cation</name>
        <dbReference type="ChEBI" id="CHEBI:24875"/>
    </ligand>
</feature>
<feature type="binding site" evidence="1">
    <location>
        <position position="119"/>
    </location>
    <ligand>
        <name>Fe cation</name>
        <dbReference type="ChEBI" id="CHEBI:24875"/>
    </ligand>
</feature>
<feature type="binding site" evidence="1">
    <location>
        <begin position="137"/>
        <end position="141"/>
    </location>
    <ligand>
        <name>substrate</name>
    </ligand>
</feature>
<feature type="binding site" evidence="1">
    <location>
        <position position="170"/>
    </location>
    <ligand>
        <name>substrate</name>
    </ligand>
</feature>
<feature type="binding site" evidence="1">
    <location>
        <position position="183"/>
    </location>
    <ligand>
        <name>substrate</name>
    </ligand>
</feature>
<feature type="binding site" evidence="1">
    <location>
        <position position="187"/>
    </location>
    <ligand>
        <name>substrate</name>
    </ligand>
</feature>
<feature type="binding site" evidence="1">
    <location>
        <position position="276"/>
    </location>
    <ligand>
        <name>substrate</name>
    </ligand>
</feature>
<feature type="binding site" evidence="1">
    <location>
        <position position="306"/>
    </location>
    <ligand>
        <name>Fe cation</name>
        <dbReference type="ChEBI" id="CHEBI:24875"/>
    </ligand>
</feature>
<comment type="function">
    <text evidence="1">Required for the formation of a threonylcarbamoyl group on adenosine at position 37 (t(6)A37) in tRNAs that read codons beginning with adenine. Is involved in the transfer of the threonylcarbamoyl moiety of threonylcarbamoyl-AMP (TC-AMP) to the N6 group of A37, together with TsaE and TsaB. TsaD likely plays a direct catalytic role in this reaction.</text>
</comment>
<comment type="catalytic activity">
    <reaction evidence="1">
        <text>L-threonylcarbamoyladenylate + adenosine(37) in tRNA = N(6)-L-threonylcarbamoyladenosine(37) in tRNA + AMP + H(+)</text>
        <dbReference type="Rhea" id="RHEA:37059"/>
        <dbReference type="Rhea" id="RHEA-COMP:10162"/>
        <dbReference type="Rhea" id="RHEA-COMP:10163"/>
        <dbReference type="ChEBI" id="CHEBI:15378"/>
        <dbReference type="ChEBI" id="CHEBI:73682"/>
        <dbReference type="ChEBI" id="CHEBI:74411"/>
        <dbReference type="ChEBI" id="CHEBI:74418"/>
        <dbReference type="ChEBI" id="CHEBI:456215"/>
        <dbReference type="EC" id="2.3.1.234"/>
    </reaction>
</comment>
<comment type="cofactor">
    <cofactor evidence="1">
        <name>Fe(2+)</name>
        <dbReference type="ChEBI" id="CHEBI:29033"/>
    </cofactor>
    <text evidence="1">Binds 1 Fe(2+) ion per subunit.</text>
</comment>
<comment type="subcellular location">
    <subcellularLocation>
        <location evidence="1">Cytoplasm</location>
    </subcellularLocation>
</comment>
<comment type="similarity">
    <text evidence="1">Belongs to the KAE1 / TsaD family.</text>
</comment>
<reference key="1">
    <citation type="journal article" date="2008" name="DNA Res.">
        <title>Comparative genome analysis of Lactobacillus reuteri and Lactobacillus fermentum reveal a genomic island for reuterin and cobalamin production.</title>
        <authorList>
            <person name="Morita H."/>
            <person name="Toh H."/>
            <person name="Fukuda S."/>
            <person name="Horikawa H."/>
            <person name="Oshima K."/>
            <person name="Suzuki T."/>
            <person name="Murakami M."/>
            <person name="Hisamatsu S."/>
            <person name="Kato Y."/>
            <person name="Takizawa T."/>
            <person name="Fukuoka H."/>
            <person name="Yoshimura T."/>
            <person name="Itoh K."/>
            <person name="O'Sullivan D.J."/>
            <person name="McKay L.L."/>
            <person name="Ohno H."/>
            <person name="Kikuchi J."/>
            <person name="Masaoka T."/>
            <person name="Hattori M."/>
        </authorList>
    </citation>
    <scope>NUCLEOTIDE SEQUENCE [LARGE SCALE GENOMIC DNA]</scope>
    <source>
        <strain>NBRC 3956 / LMG 18251</strain>
    </source>
</reference>
<proteinExistence type="inferred from homology"/>
<evidence type="ECO:0000255" key="1">
    <source>
        <dbReference type="HAMAP-Rule" id="MF_01445"/>
    </source>
</evidence>
<name>TSAD_LIMF3</name>
<accession>B2GAG0</accession>
<organism>
    <name type="scientific">Limosilactobacillus fermentum (strain NBRC 3956 / LMG 18251)</name>
    <name type="common">Lactobacillus fermentum</name>
    <dbReference type="NCBI Taxonomy" id="334390"/>
    <lineage>
        <taxon>Bacteria</taxon>
        <taxon>Bacillati</taxon>
        <taxon>Bacillota</taxon>
        <taxon>Bacilli</taxon>
        <taxon>Lactobacillales</taxon>
        <taxon>Lactobacillaceae</taxon>
        <taxon>Limosilactobacillus</taxon>
    </lineage>
</organism>
<keyword id="KW-0012">Acyltransferase</keyword>
<keyword id="KW-0963">Cytoplasm</keyword>
<keyword id="KW-0408">Iron</keyword>
<keyword id="KW-0479">Metal-binding</keyword>
<keyword id="KW-1185">Reference proteome</keyword>
<keyword id="KW-0808">Transferase</keyword>
<keyword id="KW-0819">tRNA processing</keyword>